<name>DLTC_STRTD</name>
<dbReference type="EMBL" id="CP000419">
    <property type="protein sequence ID" value="ABJ66053.1"/>
    <property type="molecule type" value="Genomic_DNA"/>
</dbReference>
<dbReference type="RefSeq" id="WP_002950439.1">
    <property type="nucleotide sequence ID" value="NC_008532.1"/>
</dbReference>
<dbReference type="SMR" id="Q03L69"/>
<dbReference type="GeneID" id="66898661"/>
<dbReference type="KEGG" id="ste:STER_0804"/>
<dbReference type="HOGENOM" id="CLU_108696_19_0_9"/>
<dbReference type="UniPathway" id="UPA00556"/>
<dbReference type="GO" id="GO:0005737">
    <property type="term" value="C:cytoplasm"/>
    <property type="evidence" value="ECO:0007669"/>
    <property type="project" value="UniProtKB-SubCell"/>
</dbReference>
<dbReference type="GO" id="GO:0036370">
    <property type="term" value="F:D-alanyl carrier activity"/>
    <property type="evidence" value="ECO:0007669"/>
    <property type="project" value="UniProtKB-UniRule"/>
</dbReference>
<dbReference type="GO" id="GO:0071555">
    <property type="term" value="P:cell wall organization"/>
    <property type="evidence" value="ECO:0007669"/>
    <property type="project" value="UniProtKB-KW"/>
</dbReference>
<dbReference type="GO" id="GO:0070395">
    <property type="term" value="P:lipoteichoic acid biosynthetic process"/>
    <property type="evidence" value="ECO:0007669"/>
    <property type="project" value="UniProtKB-UniRule"/>
</dbReference>
<dbReference type="Gene3D" id="1.10.1200.10">
    <property type="entry name" value="ACP-like"/>
    <property type="match status" value="1"/>
</dbReference>
<dbReference type="HAMAP" id="MF_00565">
    <property type="entry name" value="DltC"/>
    <property type="match status" value="1"/>
</dbReference>
<dbReference type="InterPro" id="IPR036736">
    <property type="entry name" value="ACP-like_sf"/>
</dbReference>
<dbReference type="InterPro" id="IPR003230">
    <property type="entry name" value="DltC"/>
</dbReference>
<dbReference type="InterPro" id="IPR009081">
    <property type="entry name" value="PP-bd_ACP"/>
</dbReference>
<dbReference type="NCBIfam" id="TIGR01688">
    <property type="entry name" value="dltC"/>
    <property type="match status" value="1"/>
</dbReference>
<dbReference type="NCBIfam" id="NF003464">
    <property type="entry name" value="PRK05087.1"/>
    <property type="match status" value="1"/>
</dbReference>
<dbReference type="Pfam" id="PF00550">
    <property type="entry name" value="PP-binding"/>
    <property type="match status" value="1"/>
</dbReference>
<dbReference type="SUPFAM" id="SSF47336">
    <property type="entry name" value="ACP-like"/>
    <property type="match status" value="1"/>
</dbReference>
<dbReference type="PROSITE" id="PS50075">
    <property type="entry name" value="CARRIER"/>
    <property type="match status" value="1"/>
</dbReference>
<reference key="1">
    <citation type="journal article" date="2006" name="Proc. Natl. Acad. Sci. U.S.A.">
        <title>Comparative genomics of the lactic acid bacteria.</title>
        <authorList>
            <person name="Makarova K.S."/>
            <person name="Slesarev A."/>
            <person name="Wolf Y.I."/>
            <person name="Sorokin A."/>
            <person name="Mirkin B."/>
            <person name="Koonin E.V."/>
            <person name="Pavlov A."/>
            <person name="Pavlova N."/>
            <person name="Karamychev V."/>
            <person name="Polouchine N."/>
            <person name="Shakhova V."/>
            <person name="Grigoriev I."/>
            <person name="Lou Y."/>
            <person name="Rohksar D."/>
            <person name="Lucas S."/>
            <person name="Huang K."/>
            <person name="Goodstein D.M."/>
            <person name="Hawkins T."/>
            <person name="Plengvidhya V."/>
            <person name="Welker D."/>
            <person name="Hughes J."/>
            <person name="Goh Y."/>
            <person name="Benson A."/>
            <person name="Baldwin K."/>
            <person name="Lee J.-H."/>
            <person name="Diaz-Muniz I."/>
            <person name="Dosti B."/>
            <person name="Smeianov V."/>
            <person name="Wechter W."/>
            <person name="Barabote R."/>
            <person name="Lorca G."/>
            <person name="Altermann E."/>
            <person name="Barrangou R."/>
            <person name="Ganesan B."/>
            <person name="Xie Y."/>
            <person name="Rawsthorne H."/>
            <person name="Tamir D."/>
            <person name="Parker C."/>
            <person name="Breidt F."/>
            <person name="Broadbent J.R."/>
            <person name="Hutkins R."/>
            <person name="O'Sullivan D."/>
            <person name="Steele J."/>
            <person name="Unlu G."/>
            <person name="Saier M.H. Jr."/>
            <person name="Klaenhammer T."/>
            <person name="Richardson P."/>
            <person name="Kozyavkin S."/>
            <person name="Weimer B.C."/>
            <person name="Mills D.A."/>
        </authorList>
    </citation>
    <scope>NUCLEOTIDE SEQUENCE [LARGE SCALE GENOMIC DNA]</scope>
    <source>
        <strain>ATCC BAA-491 / LMD-9</strain>
    </source>
</reference>
<keyword id="KW-0961">Cell wall biogenesis/degradation</keyword>
<keyword id="KW-0963">Cytoplasm</keyword>
<keyword id="KW-0596">Phosphopantetheine</keyword>
<keyword id="KW-0597">Phosphoprotein</keyword>
<accession>Q03L69</accession>
<proteinExistence type="inferred from homology"/>
<gene>
    <name evidence="1" type="primary">dltC</name>
    <name type="ordered locus">STER_0804</name>
</gene>
<protein>
    <recommendedName>
        <fullName evidence="1">D-alanyl carrier protein</fullName>
        <shortName evidence="1">DCP</shortName>
    </recommendedName>
    <alternativeName>
        <fullName evidence="1">D-alanine--poly(phosphoribitol) ligase subunit 2</fullName>
    </alternativeName>
</protein>
<sequence>MDVKAEVIEIIDELFMEDVSDMMDEDLFDAGVLDSMGTVELIVELESRFDIRVPVSEFGRDDWNTANKIVEGVTELRNA</sequence>
<organism>
    <name type="scientific">Streptococcus thermophilus (strain ATCC BAA-491 / LMD-9)</name>
    <dbReference type="NCBI Taxonomy" id="322159"/>
    <lineage>
        <taxon>Bacteria</taxon>
        <taxon>Bacillati</taxon>
        <taxon>Bacillota</taxon>
        <taxon>Bacilli</taxon>
        <taxon>Lactobacillales</taxon>
        <taxon>Streptococcaceae</taxon>
        <taxon>Streptococcus</taxon>
    </lineage>
</organism>
<evidence type="ECO:0000255" key="1">
    <source>
        <dbReference type="HAMAP-Rule" id="MF_00565"/>
    </source>
</evidence>
<comment type="function">
    <text evidence="1">Carrier protein involved in the D-alanylation of lipoteichoic acid (LTA). The loading of thioester-linked D-alanine onto DltC is catalyzed by D-alanine--D-alanyl carrier protein ligase DltA. The DltC-carried D-alanyl group is further transferred to cell membrane phosphatidylglycerol (PG) by forming an ester bond, probably catalyzed by DltD. D-alanylation of LTA plays an important role in modulating the properties of the cell wall in Gram-positive bacteria, influencing the net charge of the cell wall.</text>
</comment>
<comment type="pathway">
    <text evidence="1">Cell wall biogenesis; lipoteichoic acid biosynthesis.</text>
</comment>
<comment type="subcellular location">
    <subcellularLocation>
        <location evidence="1">Cytoplasm</location>
    </subcellularLocation>
</comment>
<comment type="PTM">
    <text evidence="1">4'-phosphopantetheine is transferred from CoA to a specific serine of apo-DCP.</text>
</comment>
<comment type="similarity">
    <text evidence="1">Belongs to the DltC family.</text>
</comment>
<feature type="chain" id="PRO_1000024939" description="D-alanyl carrier protein">
    <location>
        <begin position="1"/>
        <end position="79"/>
    </location>
</feature>
<feature type="domain" description="Carrier" evidence="1">
    <location>
        <begin position="1"/>
        <end position="77"/>
    </location>
</feature>
<feature type="modified residue" description="O-(pantetheine 4'-phosphoryl)serine" evidence="1">
    <location>
        <position position="35"/>
    </location>
</feature>